<gene>
    <name evidence="6" type="primary">Bnip1</name>
    <name evidence="5" type="synonym">Sec20</name>
    <name type="synonym">Sec20l</name>
</gene>
<dbReference type="EMBL" id="AY547731">
    <property type="protein sequence ID" value="AAS55065.1"/>
    <property type="molecule type" value="mRNA"/>
</dbReference>
<dbReference type="EMBL" id="CT025550">
    <property type="status" value="NOT_ANNOTATED_CDS"/>
    <property type="molecule type" value="Genomic_DNA"/>
</dbReference>
<dbReference type="EMBL" id="BC086888">
    <property type="protein sequence ID" value="AAH86888.1"/>
    <property type="molecule type" value="mRNA"/>
</dbReference>
<dbReference type="CCDS" id="CCDS28555.1"/>
<dbReference type="RefSeq" id="NP_742161.4">
    <property type="nucleotide sequence ID" value="NM_172149.5"/>
</dbReference>
<dbReference type="SMR" id="Q6QD59"/>
<dbReference type="BioGRID" id="230293">
    <property type="interactions" value="3"/>
</dbReference>
<dbReference type="FunCoup" id="Q6QD59">
    <property type="interactions" value="3610"/>
</dbReference>
<dbReference type="STRING" id="10090.ENSMUSP00000015725"/>
<dbReference type="GlyGen" id="Q6QD59">
    <property type="glycosylation" value="2 sites, 1 N-linked glycan (1 site), 1 O-linked glycan (1 site)"/>
</dbReference>
<dbReference type="iPTMnet" id="Q6QD59"/>
<dbReference type="PhosphoSitePlus" id="Q6QD59"/>
<dbReference type="SwissPalm" id="Q6QD59"/>
<dbReference type="jPOST" id="Q6QD59"/>
<dbReference type="PaxDb" id="10090-ENSMUSP00000015725"/>
<dbReference type="PeptideAtlas" id="Q6QD59"/>
<dbReference type="ProteomicsDB" id="256610"/>
<dbReference type="Pumba" id="Q6QD59"/>
<dbReference type="Antibodypedia" id="2356">
    <property type="antibodies" value="546 antibodies from 35 providers"/>
</dbReference>
<dbReference type="DNASU" id="224630"/>
<dbReference type="Ensembl" id="ENSMUST00000015725.16">
    <property type="protein sequence ID" value="ENSMUSP00000015725.9"/>
    <property type="gene ID" value="ENSMUSG00000024191.16"/>
</dbReference>
<dbReference type="GeneID" id="224630"/>
<dbReference type="KEGG" id="mmu:224630"/>
<dbReference type="UCSC" id="uc008ben.2">
    <property type="organism name" value="mouse"/>
</dbReference>
<dbReference type="AGR" id="MGI:109328"/>
<dbReference type="CTD" id="662"/>
<dbReference type="MGI" id="MGI:109328">
    <property type="gene designation" value="Bnip1"/>
</dbReference>
<dbReference type="VEuPathDB" id="HostDB:ENSMUSG00000024191"/>
<dbReference type="eggNOG" id="ENOG502QUTT">
    <property type="taxonomic scope" value="Eukaryota"/>
</dbReference>
<dbReference type="GeneTree" id="ENSGT00390000014412"/>
<dbReference type="InParanoid" id="Q6QD59"/>
<dbReference type="OMA" id="RIIMVVG"/>
<dbReference type="OrthoDB" id="46868at2759"/>
<dbReference type="PhylomeDB" id="Q6QD59"/>
<dbReference type="TreeFam" id="TF324339"/>
<dbReference type="Reactome" id="R-MMU-6811434">
    <property type="pathway name" value="COPI-dependent Golgi-to-ER retrograde traffic"/>
</dbReference>
<dbReference type="BioGRID-ORCS" id="224630">
    <property type="hits" value="15 hits in 77 CRISPR screens"/>
</dbReference>
<dbReference type="ChiTaRS" id="Bnip1">
    <property type="organism name" value="mouse"/>
</dbReference>
<dbReference type="PRO" id="PR:Q6QD59"/>
<dbReference type="Proteomes" id="UP000000589">
    <property type="component" value="Chromosome 17"/>
</dbReference>
<dbReference type="RNAct" id="Q6QD59">
    <property type="molecule type" value="protein"/>
</dbReference>
<dbReference type="Bgee" id="ENSMUSG00000024191">
    <property type="expression patterns" value="Expressed in hindlimb stylopod muscle and 224 other cell types or tissues"/>
</dbReference>
<dbReference type="ExpressionAtlas" id="Q6QD59">
    <property type="expression patterns" value="baseline and differential"/>
</dbReference>
<dbReference type="GO" id="GO:0030137">
    <property type="term" value="C:COPI-coated vesicle"/>
    <property type="evidence" value="ECO:0007669"/>
    <property type="project" value="Ensembl"/>
</dbReference>
<dbReference type="GO" id="GO:0005737">
    <property type="term" value="C:cytoplasm"/>
    <property type="evidence" value="ECO:0000266"/>
    <property type="project" value="MGI"/>
</dbReference>
<dbReference type="GO" id="GO:0005783">
    <property type="term" value="C:endoplasmic reticulum"/>
    <property type="evidence" value="ECO:0000250"/>
    <property type="project" value="HGNC-UCL"/>
</dbReference>
<dbReference type="GO" id="GO:0005789">
    <property type="term" value="C:endoplasmic reticulum membrane"/>
    <property type="evidence" value="ECO:0007669"/>
    <property type="project" value="UniProtKB-SubCell"/>
</dbReference>
<dbReference type="GO" id="GO:0043231">
    <property type="term" value="C:intracellular membrane-bounded organelle"/>
    <property type="evidence" value="ECO:0000250"/>
    <property type="project" value="UniProtKB"/>
</dbReference>
<dbReference type="GO" id="GO:0005741">
    <property type="term" value="C:mitochondrial outer membrane"/>
    <property type="evidence" value="ECO:0007669"/>
    <property type="project" value="Ensembl"/>
</dbReference>
<dbReference type="GO" id="GO:0005635">
    <property type="term" value="C:nuclear envelope"/>
    <property type="evidence" value="ECO:0000250"/>
    <property type="project" value="UniProtKB"/>
</dbReference>
<dbReference type="GO" id="GO:0031201">
    <property type="term" value="C:SNARE complex"/>
    <property type="evidence" value="ECO:0000250"/>
    <property type="project" value="HGNC-UCL"/>
</dbReference>
<dbReference type="GO" id="GO:0048763">
    <property type="term" value="F:calcium-induced calcium release activity"/>
    <property type="evidence" value="ECO:0007669"/>
    <property type="project" value="Ensembl"/>
</dbReference>
<dbReference type="GO" id="GO:0005484">
    <property type="term" value="F:SNAP receptor activity"/>
    <property type="evidence" value="ECO:0007669"/>
    <property type="project" value="Ensembl"/>
</dbReference>
<dbReference type="GO" id="GO:0006915">
    <property type="term" value="P:apoptotic process"/>
    <property type="evidence" value="ECO:0000266"/>
    <property type="project" value="MGI"/>
</dbReference>
<dbReference type="GO" id="GO:0140208">
    <property type="term" value="P:apoptotic process in response to mitochondrial fragmentation"/>
    <property type="evidence" value="ECO:0007669"/>
    <property type="project" value="Ensembl"/>
</dbReference>
<dbReference type="GO" id="GO:0016320">
    <property type="term" value="P:endoplasmic reticulum membrane fusion"/>
    <property type="evidence" value="ECO:0000250"/>
    <property type="project" value="HGNC-UCL"/>
</dbReference>
<dbReference type="GO" id="GO:0007029">
    <property type="term" value="P:endoplasmic reticulum organization"/>
    <property type="evidence" value="ECO:0000250"/>
    <property type="project" value="HGNC-UCL"/>
</dbReference>
<dbReference type="GO" id="GO:0015031">
    <property type="term" value="P:protein transport"/>
    <property type="evidence" value="ECO:0007669"/>
    <property type="project" value="UniProtKB-KW"/>
</dbReference>
<dbReference type="GO" id="GO:0014823">
    <property type="term" value="P:response to activity"/>
    <property type="evidence" value="ECO:0007669"/>
    <property type="project" value="Ensembl"/>
</dbReference>
<dbReference type="GO" id="GO:0090649">
    <property type="term" value="P:response to oxygen-glucose deprivation"/>
    <property type="evidence" value="ECO:0007669"/>
    <property type="project" value="Ensembl"/>
</dbReference>
<dbReference type="GO" id="GO:0042594">
    <property type="term" value="P:response to starvation"/>
    <property type="evidence" value="ECO:0007669"/>
    <property type="project" value="Ensembl"/>
</dbReference>
<dbReference type="GO" id="GO:0006890">
    <property type="term" value="P:retrograde vesicle-mediated transport, Golgi to endoplasmic reticulum"/>
    <property type="evidence" value="ECO:0007669"/>
    <property type="project" value="InterPro"/>
</dbReference>
<dbReference type="CDD" id="cd15865">
    <property type="entry name" value="SNARE_SEC20"/>
    <property type="match status" value="1"/>
</dbReference>
<dbReference type="InterPro" id="IPR005606">
    <property type="entry name" value="Sec20"/>
</dbReference>
<dbReference type="InterPro" id="IPR056173">
    <property type="entry name" value="Sec20_C"/>
</dbReference>
<dbReference type="PANTHER" id="PTHR12825">
    <property type="entry name" value="BNIP1-RELATED"/>
    <property type="match status" value="1"/>
</dbReference>
<dbReference type="PANTHER" id="PTHR12825:SF0">
    <property type="entry name" value="VESICLE TRANSPORT PROTEIN SEC20"/>
    <property type="match status" value="1"/>
</dbReference>
<dbReference type="Pfam" id="PF03908">
    <property type="entry name" value="Sec20"/>
    <property type="match status" value="1"/>
</dbReference>
<accession>Q6QD59</accession>
<accession>B0V2Q1</accession>
<accession>Q5M9M2</accession>
<reference evidence="5" key="1">
    <citation type="submission" date="2004-02" db="EMBL/GenBank/DDBJ databases">
        <title>SNARE proteins involved in Golgi-endoplasmic reticulum transport in mammalian cells.</title>
        <authorList>
            <person name="Verrier S."/>
            <person name="Willmann M."/>
            <person name="Fischer von Mollard G."/>
            <person name="Soeling H.-D."/>
        </authorList>
    </citation>
    <scope>NUCLEOTIDE SEQUENCE [MRNA]</scope>
</reference>
<reference key="2">
    <citation type="journal article" date="2009" name="PLoS Biol.">
        <title>Lineage-specific biology revealed by a finished genome assembly of the mouse.</title>
        <authorList>
            <person name="Church D.M."/>
            <person name="Goodstadt L."/>
            <person name="Hillier L.W."/>
            <person name="Zody M.C."/>
            <person name="Goldstein S."/>
            <person name="She X."/>
            <person name="Bult C.J."/>
            <person name="Agarwala R."/>
            <person name="Cherry J.L."/>
            <person name="DiCuccio M."/>
            <person name="Hlavina W."/>
            <person name="Kapustin Y."/>
            <person name="Meric P."/>
            <person name="Maglott D."/>
            <person name="Birtle Z."/>
            <person name="Marques A.C."/>
            <person name="Graves T."/>
            <person name="Zhou S."/>
            <person name="Teague B."/>
            <person name="Potamousis K."/>
            <person name="Churas C."/>
            <person name="Place M."/>
            <person name="Herschleb J."/>
            <person name="Runnheim R."/>
            <person name="Forrest D."/>
            <person name="Amos-Landgraf J."/>
            <person name="Schwartz D.C."/>
            <person name="Cheng Z."/>
            <person name="Lindblad-Toh K."/>
            <person name="Eichler E.E."/>
            <person name="Ponting C.P."/>
        </authorList>
    </citation>
    <scope>NUCLEOTIDE SEQUENCE [LARGE SCALE GENOMIC DNA]</scope>
    <source>
        <strain>C57BL/6J</strain>
    </source>
</reference>
<reference evidence="4" key="3">
    <citation type="journal article" date="2004" name="Genome Res.">
        <title>The status, quality, and expansion of the NIH full-length cDNA project: the Mammalian Gene Collection (MGC).</title>
        <authorList>
            <consortium name="The MGC Project Team"/>
        </authorList>
    </citation>
    <scope>NUCLEOTIDE SEQUENCE [LARGE SCALE MRNA]</scope>
    <source>
        <tissue evidence="4">Kidney</tissue>
    </source>
</reference>
<reference key="4">
    <citation type="journal article" date="2010" name="Cell">
        <title>A tissue-specific atlas of mouse protein phosphorylation and expression.</title>
        <authorList>
            <person name="Huttlin E.L."/>
            <person name="Jedrychowski M.P."/>
            <person name="Elias J.E."/>
            <person name="Goswami T."/>
            <person name="Rad R."/>
            <person name="Beausoleil S.A."/>
            <person name="Villen J."/>
            <person name="Haas W."/>
            <person name="Sowa M.E."/>
            <person name="Gygi S.P."/>
        </authorList>
    </citation>
    <scope>IDENTIFICATION BY MASS SPECTROMETRY [LARGE SCALE ANALYSIS]</scope>
    <source>
        <tissue>Brain</tissue>
        <tissue>Heart</tissue>
        <tissue>Kidney</tissue>
        <tissue>Liver</tissue>
        <tissue>Lung</tissue>
        <tissue>Pancreas</tissue>
        <tissue>Spleen</tissue>
        <tissue>Testis</tissue>
    </source>
</reference>
<organism>
    <name type="scientific">Mus musculus</name>
    <name type="common">Mouse</name>
    <dbReference type="NCBI Taxonomy" id="10090"/>
    <lineage>
        <taxon>Eukaryota</taxon>
        <taxon>Metazoa</taxon>
        <taxon>Chordata</taxon>
        <taxon>Craniata</taxon>
        <taxon>Vertebrata</taxon>
        <taxon>Euteleostomi</taxon>
        <taxon>Mammalia</taxon>
        <taxon>Eutheria</taxon>
        <taxon>Euarchontoglires</taxon>
        <taxon>Glires</taxon>
        <taxon>Rodentia</taxon>
        <taxon>Myomorpha</taxon>
        <taxon>Muroidea</taxon>
        <taxon>Muridae</taxon>
        <taxon>Murinae</taxon>
        <taxon>Mus</taxon>
        <taxon>Mus</taxon>
    </lineage>
</organism>
<keyword id="KW-0053">Apoptosis</keyword>
<keyword id="KW-0175">Coiled coil</keyword>
<keyword id="KW-0256">Endoplasmic reticulum</keyword>
<keyword id="KW-0931">ER-Golgi transport</keyword>
<keyword id="KW-0472">Membrane</keyword>
<keyword id="KW-0496">Mitochondrion</keyword>
<keyword id="KW-0653">Protein transport</keyword>
<keyword id="KW-1185">Reference proteome</keyword>
<keyword id="KW-0812">Transmembrane</keyword>
<keyword id="KW-1133">Transmembrane helix</keyword>
<keyword id="KW-0813">Transport</keyword>
<keyword id="KW-0832">Ubl conjugation</keyword>
<sequence length="228" mass="26175">MAAPQDVHVRICNQEIVKFDLEVKALIQDIRDCSGPLSELTELNTKVKEKFQQLKQRIQELEQSAREQDKESEKQLLLQEVENHKKQMLSNQTSWRKANLTCKLAIDNLEKAELLQGGDSLRQRKTTKESLAQTSSSITESLMGISRMMSQQVQQSEEAMQTLVSSSRTLLDANEEFKSMSGTIQLGRKLITKYNRRELTDKLLIFLALALFLATVLYIVKKRLFPFL</sequence>
<protein>
    <recommendedName>
        <fullName>Vesicle transport protein SEC20</fullName>
    </recommendedName>
</protein>
<name>SEC20_MOUSE</name>
<proteinExistence type="evidence at protein level"/>
<feature type="chain" id="PRO_0000232417" description="Vesicle transport protein SEC20">
    <location>
        <begin position="1"/>
        <end position="228"/>
    </location>
</feature>
<feature type="topological domain" description="Cytoplasmic" evidence="2">
    <location>
        <begin position="1"/>
        <end position="199"/>
    </location>
</feature>
<feature type="transmembrane region" description="Helical; Anchor for type IV membrane protein" evidence="2">
    <location>
        <begin position="200"/>
        <end position="220"/>
    </location>
</feature>
<feature type="topological domain" description="Lumenal" evidence="2">
    <location>
        <begin position="221"/>
        <end position="228"/>
    </location>
</feature>
<feature type="coiled-coil region" evidence="2">
    <location>
        <begin position="37"/>
        <end position="90"/>
    </location>
</feature>
<feature type="sequence conflict" description="In Ref. 3; AAH86888." evidence="3" ref="3">
    <original>K</original>
    <variation>N</variation>
    <location>
        <position position="125"/>
    </location>
</feature>
<feature type="sequence conflict" description="In Ref. 3; AAH86888." evidence="3" ref="3">
    <original>S</original>
    <variation>G</variation>
    <location>
        <position position="165"/>
    </location>
</feature>
<evidence type="ECO:0000250" key="1">
    <source>
        <dbReference type="UniProtKB" id="Q12981"/>
    </source>
</evidence>
<evidence type="ECO:0000255" key="2"/>
<evidence type="ECO:0000305" key="3"/>
<evidence type="ECO:0000312" key="4">
    <source>
        <dbReference type="EMBL" id="AAH86888.1"/>
    </source>
</evidence>
<evidence type="ECO:0000312" key="5">
    <source>
        <dbReference type="EMBL" id="AAS55065.1"/>
    </source>
</evidence>
<evidence type="ECO:0000312" key="6">
    <source>
        <dbReference type="MGI" id="MGI:109328"/>
    </source>
</evidence>
<comment type="function">
    <text evidence="1">As part of a SNARE complex may be involved in endoplasmic reticulum membranes fusion and be required for the maintenance of endoplasmic reticulum organization. Also plays a role in apoptosis. It is for instance required for endoplasmic reticulum stress-induced apoptosis. As a substrate of RNF185 interacting with SQSTM1, might also be involved in mitochondrial autophagy.</text>
</comment>
<comment type="subunit">
    <text evidence="1">Component of a SNARE complex consisting of STX18, USE1L, BNIP1/SEC20L and SEC22B. Interacts directly with STX18, RINT1/TIP20L and NAPA. Interacts with ZW10 through RINT1. Interacts with BCL2. Interacts with RNF186. Interacts with RNF185. Interacts with SQSTM1; increased by 'Lys-63'-linked polyubiquitination of BNIP1.</text>
</comment>
<comment type="subcellular location">
    <subcellularLocation>
        <location evidence="1">Endoplasmic reticulum membrane</location>
        <topology evidence="2">Single-pass type IV membrane protein</topology>
    </subcellularLocation>
    <subcellularLocation>
        <location evidence="1">Mitochondrion membrane</location>
        <topology evidence="2">Single-pass type IV membrane protein</topology>
    </subcellularLocation>
    <text evidence="1">Localization to the mitochondrion is regulated by RNF186.</text>
</comment>
<comment type="PTM">
    <text evidence="1">Polyubiquitinated. 'Lys-63'-linked polyubiquitination by RNF185 increases the interaction with the autophagy receptor SQSTM1. Undergoes 'Lys-29'- and 'Lys-63'-linked polyubiquitination by RNF186 that may regulate BNIP1 localization to the mitochondrion.</text>
</comment>
<comment type="similarity">
    <text evidence="3">Belongs to the SEC20 family.</text>
</comment>